<gene>
    <name type="primary">ATXN7L2</name>
</gene>
<dbReference type="EMBL" id="AL355145">
    <property type="status" value="NOT_ANNOTATED_CDS"/>
    <property type="molecule type" value="Genomic_DNA"/>
</dbReference>
<dbReference type="CCDS" id="CCDS30794.1"/>
<dbReference type="RefSeq" id="NP_699171.3">
    <property type="nucleotide sequence ID" value="NM_153340.4"/>
</dbReference>
<dbReference type="SMR" id="Q5T6C5"/>
<dbReference type="BioGRID" id="126028">
    <property type="interactions" value="59"/>
</dbReference>
<dbReference type="CORUM" id="Q5T6C5"/>
<dbReference type="FunCoup" id="Q5T6C5">
    <property type="interactions" value="453"/>
</dbReference>
<dbReference type="IntAct" id="Q5T6C5">
    <property type="interactions" value="16"/>
</dbReference>
<dbReference type="MINT" id="Q5T6C5"/>
<dbReference type="STRING" id="9606.ENSP00000358886"/>
<dbReference type="GlyGen" id="Q5T6C5">
    <property type="glycosylation" value="1 site, 1 N-linked glycan (1 site)"/>
</dbReference>
<dbReference type="iPTMnet" id="Q5T6C5"/>
<dbReference type="PhosphoSitePlus" id="Q5T6C5"/>
<dbReference type="BioMuta" id="ATXN7L2"/>
<dbReference type="DMDM" id="74745198"/>
<dbReference type="jPOST" id="Q5T6C5"/>
<dbReference type="MassIVE" id="Q5T6C5"/>
<dbReference type="PaxDb" id="9606-ENSP00000358886"/>
<dbReference type="PeptideAtlas" id="Q5T6C5"/>
<dbReference type="ProteomicsDB" id="64577"/>
<dbReference type="Antibodypedia" id="33760">
    <property type="antibodies" value="153 antibodies from 22 providers"/>
</dbReference>
<dbReference type="DNASU" id="127002"/>
<dbReference type="Ensembl" id="ENST00000369870.7">
    <property type="protein sequence ID" value="ENSP00000358886.3"/>
    <property type="gene ID" value="ENSG00000162650.17"/>
</dbReference>
<dbReference type="GeneID" id="127002"/>
<dbReference type="KEGG" id="hsa:127002"/>
<dbReference type="UCSC" id="uc001dxr.4">
    <property type="organism name" value="human"/>
</dbReference>
<dbReference type="AGR" id="HGNC:28713"/>
<dbReference type="CTD" id="127002"/>
<dbReference type="DisGeNET" id="127002"/>
<dbReference type="GeneCards" id="ATXN7L2"/>
<dbReference type="HGNC" id="HGNC:28713">
    <property type="gene designation" value="ATXN7L2"/>
</dbReference>
<dbReference type="HPA" id="ENSG00000162650">
    <property type="expression patterns" value="Tissue enhanced (skeletal)"/>
</dbReference>
<dbReference type="neXtProt" id="NX_Q5T6C5"/>
<dbReference type="OpenTargets" id="ENSG00000162650"/>
<dbReference type="PharmGKB" id="PA134927530"/>
<dbReference type="VEuPathDB" id="HostDB:ENSG00000162650"/>
<dbReference type="eggNOG" id="ENOG502QVN4">
    <property type="taxonomic scope" value="Eukaryota"/>
</dbReference>
<dbReference type="GeneTree" id="ENSGT00940000159736"/>
<dbReference type="HOGENOM" id="CLU_019888_1_0_1"/>
<dbReference type="InParanoid" id="Q5T6C5"/>
<dbReference type="OMA" id="GKTPMAP"/>
<dbReference type="OrthoDB" id="21678at2759"/>
<dbReference type="PAN-GO" id="Q5T6C5">
    <property type="GO annotations" value="0 GO annotations based on evolutionary models"/>
</dbReference>
<dbReference type="PhylomeDB" id="Q5T6C5"/>
<dbReference type="TreeFam" id="TF331337"/>
<dbReference type="PathwayCommons" id="Q5T6C5"/>
<dbReference type="SignaLink" id="Q5T6C5"/>
<dbReference type="BioGRID-ORCS" id="127002">
    <property type="hits" value="19 hits in 1157 CRISPR screens"/>
</dbReference>
<dbReference type="GenomeRNAi" id="127002"/>
<dbReference type="Pharos" id="Q5T6C5">
    <property type="development level" value="Tdark"/>
</dbReference>
<dbReference type="PRO" id="PR:Q5T6C5"/>
<dbReference type="Proteomes" id="UP000005640">
    <property type="component" value="Chromosome 1"/>
</dbReference>
<dbReference type="RNAct" id="Q5T6C5">
    <property type="molecule type" value="protein"/>
</dbReference>
<dbReference type="Bgee" id="ENSG00000162650">
    <property type="expression patterns" value="Expressed in right hemisphere of cerebellum and 93 other cell types or tissues"/>
</dbReference>
<dbReference type="ExpressionAtlas" id="Q5T6C5">
    <property type="expression patterns" value="baseline and differential"/>
</dbReference>
<dbReference type="Gene3D" id="6.10.140.1270">
    <property type="match status" value="1"/>
</dbReference>
<dbReference type="InterPro" id="IPR052237">
    <property type="entry name" value="Ataxin-7-like_regulator"/>
</dbReference>
<dbReference type="InterPro" id="IPR013243">
    <property type="entry name" value="SCA7_dom"/>
</dbReference>
<dbReference type="PANTHER" id="PTHR15117">
    <property type="entry name" value="ATAXIN 7 RELATED"/>
    <property type="match status" value="1"/>
</dbReference>
<dbReference type="PANTHER" id="PTHR15117:SF5">
    <property type="entry name" value="ATAXIN-7-LIKE PROTEIN 2"/>
    <property type="match status" value="1"/>
</dbReference>
<dbReference type="Pfam" id="PF08313">
    <property type="entry name" value="SCA7"/>
    <property type="match status" value="1"/>
</dbReference>
<dbReference type="PROSITE" id="PS51505">
    <property type="entry name" value="SCA7"/>
    <property type="match status" value="1"/>
</dbReference>
<proteinExistence type="evidence at protein level"/>
<organism>
    <name type="scientific">Homo sapiens</name>
    <name type="common">Human</name>
    <dbReference type="NCBI Taxonomy" id="9606"/>
    <lineage>
        <taxon>Eukaryota</taxon>
        <taxon>Metazoa</taxon>
        <taxon>Chordata</taxon>
        <taxon>Craniata</taxon>
        <taxon>Vertebrata</taxon>
        <taxon>Euteleostomi</taxon>
        <taxon>Mammalia</taxon>
        <taxon>Eutheria</taxon>
        <taxon>Euarchontoglires</taxon>
        <taxon>Primates</taxon>
        <taxon>Haplorrhini</taxon>
        <taxon>Catarrhini</taxon>
        <taxon>Hominidae</taxon>
        <taxon>Homo</taxon>
    </lineage>
</organism>
<accession>Q5T6C5</accession>
<keyword id="KW-0597">Phosphoprotein</keyword>
<keyword id="KW-1267">Proteomics identification</keyword>
<keyword id="KW-1185">Reference proteome</keyword>
<feature type="chain" id="PRO_0000278300" description="Ataxin-7-like protein 2">
    <location>
        <begin position="1"/>
        <end position="722"/>
    </location>
</feature>
<feature type="domain" description="SCA7" evidence="1">
    <location>
        <begin position="230"/>
        <end position="297"/>
    </location>
</feature>
<feature type="region of interest" description="Disordered" evidence="2">
    <location>
        <begin position="106"/>
        <end position="228"/>
    </location>
</feature>
<feature type="region of interest" description="Disordered" evidence="2">
    <location>
        <begin position="288"/>
        <end position="317"/>
    </location>
</feature>
<feature type="region of interest" description="Disordered" evidence="2">
    <location>
        <begin position="347"/>
        <end position="403"/>
    </location>
</feature>
<feature type="region of interest" description="Disordered" evidence="2">
    <location>
        <begin position="531"/>
        <end position="600"/>
    </location>
</feature>
<feature type="compositionally biased region" description="Pro residues" evidence="2">
    <location>
        <begin position="181"/>
        <end position="191"/>
    </location>
</feature>
<feature type="compositionally biased region" description="Basic and acidic residues" evidence="2">
    <location>
        <begin position="290"/>
        <end position="311"/>
    </location>
</feature>
<feature type="compositionally biased region" description="Low complexity" evidence="2">
    <location>
        <begin position="541"/>
        <end position="556"/>
    </location>
</feature>
<feature type="compositionally biased region" description="Basic and acidic residues" evidence="2">
    <location>
        <begin position="558"/>
        <end position="569"/>
    </location>
</feature>
<feature type="modified residue" description="Phosphoserine" evidence="3">
    <location>
        <position position="575"/>
    </location>
</feature>
<feature type="sequence variant" id="VAR_053780" description="In dbSNP:rs1149172.">
    <original>P</original>
    <variation>S</variation>
    <location>
        <position position="495"/>
    </location>
</feature>
<protein>
    <recommendedName>
        <fullName>Ataxin-7-like protein 2</fullName>
    </recommendedName>
</protein>
<evidence type="ECO:0000255" key="1">
    <source>
        <dbReference type="PROSITE-ProRule" id="PRU00838"/>
    </source>
</evidence>
<evidence type="ECO:0000256" key="2">
    <source>
        <dbReference type="SAM" id="MobiDB-lite"/>
    </source>
</evidence>
<evidence type="ECO:0007744" key="3">
    <source>
    </source>
</evidence>
<name>AT7L2_HUMAN</name>
<sequence length="722" mass="77181">MAVRERAAAAMAALERRVPSLDDFAGQSWSSWVERADLPAADGAELEESSKNTKKLDAMTLIKEDMSIFGHCPAHDDFYLVVCNHCSQVVKPQAFQKHCERRHGPLSKLYGRAPPPPPAPASSQKCHVVNGQGPACRAPGSTKTSSREKGQGSRSRGHQPPEKTQKDNLCQPGGLTKDSPGKPPMAPPSKEPPGRENIEIIPSEGSSHWAEGSPPEKEPSGTRLPPKTHRKMARKECDLNRQCGVINPETKKICTRLLTCKIHSVHQRREVQGRAKDFDVLVAELKANSRKGESPKEKSPGRKEQVLERPSQELPSSVQVVAAVAAPSSTFSVRAKQTYPYCALPRSRASSESELDDEGPCGGDGDPGLFPFPMPRGGTQASSEESEEEGTSDDLHPPPDCHYATRPPRPQAFCTFGSRLVSPGCYVFSRRLDRFCSALSSMLERHLSTHMWKKIPPAAEPPAHLVNSPLSAPLSPSSTGTCPRLPGPTLRPACPASMPPTKDNLVPSYPAGSPSVAAACSQAECMGGSQAITSPLPANTPSPSFSKLPPSKASKSSKGKDGVEVEAPSRKRKLSPGPTTLKRTCILEPTGKGKPSGCRGLSAKTKTALSMGLNGTMGPRVKRAGPLDCRGSPHQLPTPVKASQLENRGAAGHPAKALPTNCLSEEEVAKKRKNLATYCRPVKAKHCQAGAPADVACSVRRKKPGPALAFEEKCSTLKSKAH</sequence>
<reference key="1">
    <citation type="journal article" date="2006" name="Nature">
        <title>The DNA sequence and biological annotation of human chromosome 1.</title>
        <authorList>
            <person name="Gregory S.G."/>
            <person name="Barlow K.F."/>
            <person name="McLay K.E."/>
            <person name="Kaul R."/>
            <person name="Swarbreck D."/>
            <person name="Dunham A."/>
            <person name="Scott C.E."/>
            <person name="Howe K.L."/>
            <person name="Woodfine K."/>
            <person name="Spencer C.C.A."/>
            <person name="Jones M.C."/>
            <person name="Gillson C."/>
            <person name="Searle S."/>
            <person name="Zhou Y."/>
            <person name="Kokocinski F."/>
            <person name="McDonald L."/>
            <person name="Evans R."/>
            <person name="Phillips K."/>
            <person name="Atkinson A."/>
            <person name="Cooper R."/>
            <person name="Jones C."/>
            <person name="Hall R.E."/>
            <person name="Andrews T.D."/>
            <person name="Lloyd C."/>
            <person name="Ainscough R."/>
            <person name="Almeida J.P."/>
            <person name="Ambrose K.D."/>
            <person name="Anderson F."/>
            <person name="Andrew R.W."/>
            <person name="Ashwell R.I.S."/>
            <person name="Aubin K."/>
            <person name="Babbage A.K."/>
            <person name="Bagguley C.L."/>
            <person name="Bailey J."/>
            <person name="Beasley H."/>
            <person name="Bethel G."/>
            <person name="Bird C.P."/>
            <person name="Bray-Allen S."/>
            <person name="Brown J.Y."/>
            <person name="Brown A.J."/>
            <person name="Buckley D."/>
            <person name="Burton J."/>
            <person name="Bye J."/>
            <person name="Carder C."/>
            <person name="Chapman J.C."/>
            <person name="Clark S.Y."/>
            <person name="Clarke G."/>
            <person name="Clee C."/>
            <person name="Cobley V."/>
            <person name="Collier R.E."/>
            <person name="Corby N."/>
            <person name="Coville G.J."/>
            <person name="Davies J."/>
            <person name="Deadman R."/>
            <person name="Dunn M."/>
            <person name="Earthrowl M."/>
            <person name="Ellington A.G."/>
            <person name="Errington H."/>
            <person name="Frankish A."/>
            <person name="Frankland J."/>
            <person name="French L."/>
            <person name="Garner P."/>
            <person name="Garnett J."/>
            <person name="Gay L."/>
            <person name="Ghori M.R.J."/>
            <person name="Gibson R."/>
            <person name="Gilby L.M."/>
            <person name="Gillett W."/>
            <person name="Glithero R.J."/>
            <person name="Grafham D.V."/>
            <person name="Griffiths C."/>
            <person name="Griffiths-Jones S."/>
            <person name="Grocock R."/>
            <person name="Hammond S."/>
            <person name="Harrison E.S.I."/>
            <person name="Hart E."/>
            <person name="Haugen E."/>
            <person name="Heath P.D."/>
            <person name="Holmes S."/>
            <person name="Holt K."/>
            <person name="Howden P.J."/>
            <person name="Hunt A.R."/>
            <person name="Hunt S.E."/>
            <person name="Hunter G."/>
            <person name="Isherwood J."/>
            <person name="James R."/>
            <person name="Johnson C."/>
            <person name="Johnson D."/>
            <person name="Joy A."/>
            <person name="Kay M."/>
            <person name="Kershaw J.K."/>
            <person name="Kibukawa M."/>
            <person name="Kimberley A.M."/>
            <person name="King A."/>
            <person name="Knights A.J."/>
            <person name="Lad H."/>
            <person name="Laird G."/>
            <person name="Lawlor S."/>
            <person name="Leongamornlert D.A."/>
            <person name="Lloyd D.M."/>
            <person name="Loveland J."/>
            <person name="Lovell J."/>
            <person name="Lush M.J."/>
            <person name="Lyne R."/>
            <person name="Martin S."/>
            <person name="Mashreghi-Mohammadi M."/>
            <person name="Matthews L."/>
            <person name="Matthews N.S.W."/>
            <person name="McLaren S."/>
            <person name="Milne S."/>
            <person name="Mistry S."/>
            <person name="Moore M.J.F."/>
            <person name="Nickerson T."/>
            <person name="O'Dell C.N."/>
            <person name="Oliver K."/>
            <person name="Palmeiri A."/>
            <person name="Palmer S.A."/>
            <person name="Parker A."/>
            <person name="Patel D."/>
            <person name="Pearce A.V."/>
            <person name="Peck A.I."/>
            <person name="Pelan S."/>
            <person name="Phelps K."/>
            <person name="Phillimore B.J."/>
            <person name="Plumb R."/>
            <person name="Rajan J."/>
            <person name="Raymond C."/>
            <person name="Rouse G."/>
            <person name="Saenphimmachak C."/>
            <person name="Sehra H.K."/>
            <person name="Sheridan E."/>
            <person name="Shownkeen R."/>
            <person name="Sims S."/>
            <person name="Skuce C.D."/>
            <person name="Smith M."/>
            <person name="Steward C."/>
            <person name="Subramanian S."/>
            <person name="Sycamore N."/>
            <person name="Tracey A."/>
            <person name="Tromans A."/>
            <person name="Van Helmond Z."/>
            <person name="Wall M."/>
            <person name="Wallis J.M."/>
            <person name="White S."/>
            <person name="Whitehead S.L."/>
            <person name="Wilkinson J.E."/>
            <person name="Willey D.L."/>
            <person name="Williams H."/>
            <person name="Wilming L."/>
            <person name="Wray P.W."/>
            <person name="Wu Z."/>
            <person name="Coulson A."/>
            <person name="Vaudin M."/>
            <person name="Sulston J.E."/>
            <person name="Durbin R.M."/>
            <person name="Hubbard T."/>
            <person name="Wooster R."/>
            <person name="Dunham I."/>
            <person name="Carter N.P."/>
            <person name="McVean G."/>
            <person name="Ross M.T."/>
            <person name="Harrow J."/>
            <person name="Olson M.V."/>
            <person name="Beck S."/>
            <person name="Rogers J."/>
            <person name="Bentley D.R."/>
        </authorList>
    </citation>
    <scope>NUCLEOTIDE SEQUENCE [LARGE SCALE GENOMIC DNA]</scope>
</reference>
<reference key="2">
    <citation type="journal article" date="2013" name="J. Proteome Res.">
        <title>Toward a comprehensive characterization of a human cancer cell phosphoproteome.</title>
        <authorList>
            <person name="Zhou H."/>
            <person name="Di Palma S."/>
            <person name="Preisinger C."/>
            <person name="Peng M."/>
            <person name="Polat A.N."/>
            <person name="Heck A.J."/>
            <person name="Mohammed S."/>
        </authorList>
    </citation>
    <scope>PHOSPHORYLATION [LARGE SCALE ANALYSIS] AT SER-575</scope>
    <scope>IDENTIFICATION BY MASS SPECTROMETRY [LARGE SCALE ANALYSIS]</scope>
    <source>
        <tissue>Cervix carcinoma</tissue>
        <tissue>Erythroleukemia</tissue>
    </source>
</reference>